<organism>
    <name type="scientific">Listeria monocytogenes serovar 1/2a (strain ATCC BAA-679 / EGD-e)</name>
    <dbReference type="NCBI Taxonomy" id="169963"/>
    <lineage>
        <taxon>Bacteria</taxon>
        <taxon>Bacillati</taxon>
        <taxon>Bacillota</taxon>
        <taxon>Bacilli</taxon>
        <taxon>Bacillales</taxon>
        <taxon>Listeriaceae</taxon>
        <taxon>Listeria</taxon>
    </lineage>
</organism>
<feature type="chain" id="PRO_0000103478" description="Dihydroxy-acid dehydratase">
    <location>
        <begin position="1"/>
        <end position="564"/>
    </location>
</feature>
<feature type="active site" description="Proton acceptor" evidence="1">
    <location>
        <position position="473"/>
    </location>
</feature>
<feature type="binding site" evidence="1">
    <location>
        <position position="80"/>
    </location>
    <ligand>
        <name>Mg(2+)</name>
        <dbReference type="ChEBI" id="CHEBI:18420"/>
    </ligand>
</feature>
<feature type="binding site" evidence="1">
    <location>
        <position position="121"/>
    </location>
    <ligand>
        <name>[2Fe-2S] cluster</name>
        <dbReference type="ChEBI" id="CHEBI:190135"/>
    </ligand>
</feature>
<feature type="binding site" evidence="1">
    <location>
        <position position="122"/>
    </location>
    <ligand>
        <name>Mg(2+)</name>
        <dbReference type="ChEBI" id="CHEBI:18420"/>
    </ligand>
</feature>
<feature type="binding site" description="via carbamate group" evidence="1">
    <location>
        <position position="123"/>
    </location>
    <ligand>
        <name>Mg(2+)</name>
        <dbReference type="ChEBI" id="CHEBI:18420"/>
    </ligand>
</feature>
<feature type="binding site" evidence="1">
    <location>
        <position position="194"/>
    </location>
    <ligand>
        <name>[2Fe-2S] cluster</name>
        <dbReference type="ChEBI" id="CHEBI:190135"/>
    </ligand>
</feature>
<feature type="binding site" evidence="1">
    <location>
        <position position="447"/>
    </location>
    <ligand>
        <name>Mg(2+)</name>
        <dbReference type="ChEBI" id="CHEBI:18420"/>
    </ligand>
</feature>
<feature type="modified residue" description="N6-carboxylysine" evidence="1">
    <location>
        <position position="123"/>
    </location>
</feature>
<accession>Q8Y5S2</accession>
<evidence type="ECO:0000255" key="1">
    <source>
        <dbReference type="HAMAP-Rule" id="MF_00012"/>
    </source>
</evidence>
<proteinExistence type="inferred from homology"/>
<comment type="function">
    <text evidence="1">Functions in the biosynthesis of branched-chain amino acids. Catalyzes the dehydration of (2R,3R)-2,3-dihydroxy-3-methylpentanoate (2,3-dihydroxy-3-methylvalerate) into 2-oxo-3-methylpentanoate (2-oxo-3-methylvalerate) and of (2R)-2,3-dihydroxy-3-methylbutanoate (2,3-dihydroxyisovalerate) into 2-oxo-3-methylbutanoate (2-oxoisovalerate), the penultimate precursor to L-isoleucine and L-valine, respectively.</text>
</comment>
<comment type="catalytic activity">
    <reaction evidence="1">
        <text>(2R)-2,3-dihydroxy-3-methylbutanoate = 3-methyl-2-oxobutanoate + H2O</text>
        <dbReference type="Rhea" id="RHEA:24809"/>
        <dbReference type="ChEBI" id="CHEBI:11851"/>
        <dbReference type="ChEBI" id="CHEBI:15377"/>
        <dbReference type="ChEBI" id="CHEBI:49072"/>
        <dbReference type="EC" id="4.2.1.9"/>
    </reaction>
    <physiologicalReaction direction="left-to-right" evidence="1">
        <dbReference type="Rhea" id="RHEA:24810"/>
    </physiologicalReaction>
</comment>
<comment type="catalytic activity">
    <reaction evidence="1">
        <text>(2R,3R)-2,3-dihydroxy-3-methylpentanoate = (S)-3-methyl-2-oxopentanoate + H2O</text>
        <dbReference type="Rhea" id="RHEA:27694"/>
        <dbReference type="ChEBI" id="CHEBI:15377"/>
        <dbReference type="ChEBI" id="CHEBI:35146"/>
        <dbReference type="ChEBI" id="CHEBI:49258"/>
        <dbReference type="EC" id="4.2.1.9"/>
    </reaction>
    <physiologicalReaction direction="left-to-right" evidence="1">
        <dbReference type="Rhea" id="RHEA:27695"/>
    </physiologicalReaction>
</comment>
<comment type="cofactor">
    <cofactor evidence="1">
        <name>[2Fe-2S] cluster</name>
        <dbReference type="ChEBI" id="CHEBI:190135"/>
    </cofactor>
    <text evidence="1">Binds 1 [2Fe-2S] cluster per subunit. This cluster acts as a Lewis acid cofactor.</text>
</comment>
<comment type="cofactor">
    <cofactor evidence="1">
        <name>Mg(2+)</name>
        <dbReference type="ChEBI" id="CHEBI:18420"/>
    </cofactor>
</comment>
<comment type="pathway">
    <text evidence="1">Amino-acid biosynthesis; L-isoleucine biosynthesis; L-isoleucine from 2-oxobutanoate: step 3/4.</text>
</comment>
<comment type="pathway">
    <text evidence="1">Amino-acid biosynthesis; L-valine biosynthesis; L-valine from pyruvate: step 3/4.</text>
</comment>
<comment type="subunit">
    <text evidence="1">Homodimer.</text>
</comment>
<comment type="similarity">
    <text evidence="1">Belongs to the IlvD/Edd family.</text>
</comment>
<reference key="1">
    <citation type="journal article" date="2001" name="Science">
        <title>Comparative genomics of Listeria species.</title>
        <authorList>
            <person name="Glaser P."/>
            <person name="Frangeul L."/>
            <person name="Buchrieser C."/>
            <person name="Rusniok C."/>
            <person name="Amend A."/>
            <person name="Baquero F."/>
            <person name="Berche P."/>
            <person name="Bloecker H."/>
            <person name="Brandt P."/>
            <person name="Chakraborty T."/>
            <person name="Charbit A."/>
            <person name="Chetouani F."/>
            <person name="Couve E."/>
            <person name="de Daruvar A."/>
            <person name="Dehoux P."/>
            <person name="Domann E."/>
            <person name="Dominguez-Bernal G."/>
            <person name="Duchaud E."/>
            <person name="Durant L."/>
            <person name="Dussurget O."/>
            <person name="Entian K.-D."/>
            <person name="Fsihi H."/>
            <person name="Garcia-del Portillo F."/>
            <person name="Garrido P."/>
            <person name="Gautier L."/>
            <person name="Goebel W."/>
            <person name="Gomez-Lopez N."/>
            <person name="Hain T."/>
            <person name="Hauf J."/>
            <person name="Jackson D."/>
            <person name="Jones L.-M."/>
            <person name="Kaerst U."/>
            <person name="Kreft J."/>
            <person name="Kuhn M."/>
            <person name="Kunst F."/>
            <person name="Kurapkat G."/>
            <person name="Madueno E."/>
            <person name="Maitournam A."/>
            <person name="Mata Vicente J."/>
            <person name="Ng E."/>
            <person name="Nedjari H."/>
            <person name="Nordsiek G."/>
            <person name="Novella S."/>
            <person name="de Pablos B."/>
            <person name="Perez-Diaz J.-C."/>
            <person name="Purcell R."/>
            <person name="Remmel B."/>
            <person name="Rose M."/>
            <person name="Schlueter T."/>
            <person name="Simoes N."/>
            <person name="Tierrez A."/>
            <person name="Vazquez-Boland J.-A."/>
            <person name="Voss H."/>
            <person name="Wehland J."/>
            <person name="Cossart P."/>
        </authorList>
    </citation>
    <scope>NUCLEOTIDE SEQUENCE [LARGE SCALE GENOMIC DNA]</scope>
    <source>
        <strain>ATCC BAA-679 / EGD-e</strain>
    </source>
</reference>
<protein>
    <recommendedName>
        <fullName evidence="1">Dihydroxy-acid dehydratase</fullName>
        <shortName evidence="1">DAD</shortName>
        <ecNumber evidence="1">4.2.1.9</ecNumber>
    </recommendedName>
</protein>
<sequence>MRSDKIKKGVEQAPARSLLHATGQIKSPGDMDKPFIAICNSYIDIVPGHVHLRELADVAKEAIREAGGIPFEFNTIGVDDGIAMGHIGMRYSLPSREVIADAAETVINAHWFDGVFYIPNCDKITPGMLLASVRTNVPAIFCSGGPMKAGLSAHGKALTLSSVFEAVGAFKDGSMSQEDFLDMEANACPTCGSCAGMFTANSMNCLMEILGMAVPGNGTTLAVSDARRDLIRESAFHLMDLVKKDIRPRDIITKDAIDDAFALDMAMGGSTNTVLHTLALANEAGIEDYDLERINDIAKRVPYLSKIAPSSSYSMHDVHEAGGVSAIVKELVDLGGAIHPDRITVTGKTIRENVADAKINNTDVIHPKENPYSPVGGLSMLFGNIAPKGAAIKVGGVDPSVQVFKGEAICFSSHDEAVEAIDNHTVREGHVVVIRYEGPKGGPGMPEMLAPTSSIVGRGLGKDVALITDGRFSGATRGIAVGHISPEAAAGGPIALVHDGDIITIDLPNRTLNVDVPDEVLEERRKELPKFKAKVKTGYLARYTALVTSAHTGGILQIPEDLID</sequence>
<dbReference type="EC" id="4.2.1.9" evidence="1"/>
<dbReference type="EMBL" id="AL591981">
    <property type="protein sequence ID" value="CAD00061.1"/>
    <property type="molecule type" value="Genomic_DNA"/>
</dbReference>
<dbReference type="PIR" id="AG1322">
    <property type="entry name" value="AG1322"/>
</dbReference>
<dbReference type="RefSeq" id="NP_465507.1">
    <property type="nucleotide sequence ID" value="NC_003210.1"/>
</dbReference>
<dbReference type="RefSeq" id="WP_003728794.1">
    <property type="nucleotide sequence ID" value="NZ_CP149495.1"/>
</dbReference>
<dbReference type="SMR" id="Q8Y5S2"/>
<dbReference type="STRING" id="169963.gene:17594668"/>
<dbReference type="PaxDb" id="169963-lmo1983"/>
<dbReference type="EnsemblBacteria" id="CAD00061">
    <property type="protein sequence ID" value="CAD00061"/>
    <property type="gene ID" value="CAD00061"/>
</dbReference>
<dbReference type="GeneID" id="87011078"/>
<dbReference type="GeneID" id="984864"/>
<dbReference type="KEGG" id="lmo:lmo1983"/>
<dbReference type="PATRIC" id="fig|169963.11.peg.2030"/>
<dbReference type="eggNOG" id="COG0129">
    <property type="taxonomic scope" value="Bacteria"/>
</dbReference>
<dbReference type="HOGENOM" id="CLU_014271_4_2_9"/>
<dbReference type="OrthoDB" id="9807077at2"/>
<dbReference type="PhylomeDB" id="Q8Y5S2"/>
<dbReference type="BioCyc" id="LMON169963:LMO1983-MONOMER"/>
<dbReference type="UniPathway" id="UPA00047">
    <property type="reaction ID" value="UER00057"/>
</dbReference>
<dbReference type="UniPathway" id="UPA00049">
    <property type="reaction ID" value="UER00061"/>
</dbReference>
<dbReference type="Proteomes" id="UP000000817">
    <property type="component" value="Chromosome"/>
</dbReference>
<dbReference type="GO" id="GO:0005829">
    <property type="term" value="C:cytosol"/>
    <property type="evidence" value="ECO:0000318"/>
    <property type="project" value="GO_Central"/>
</dbReference>
<dbReference type="GO" id="GO:0051537">
    <property type="term" value="F:2 iron, 2 sulfur cluster binding"/>
    <property type="evidence" value="ECO:0007669"/>
    <property type="project" value="UniProtKB-UniRule"/>
</dbReference>
<dbReference type="GO" id="GO:0004160">
    <property type="term" value="F:dihydroxy-acid dehydratase activity"/>
    <property type="evidence" value="ECO:0007669"/>
    <property type="project" value="UniProtKB-UniRule"/>
</dbReference>
<dbReference type="GO" id="GO:0016836">
    <property type="term" value="F:hydro-lyase activity"/>
    <property type="evidence" value="ECO:0000318"/>
    <property type="project" value="GO_Central"/>
</dbReference>
<dbReference type="GO" id="GO:0000287">
    <property type="term" value="F:magnesium ion binding"/>
    <property type="evidence" value="ECO:0007669"/>
    <property type="project" value="UniProtKB-UniRule"/>
</dbReference>
<dbReference type="GO" id="GO:0009097">
    <property type="term" value="P:isoleucine biosynthetic process"/>
    <property type="evidence" value="ECO:0007669"/>
    <property type="project" value="UniProtKB-UniRule"/>
</dbReference>
<dbReference type="GO" id="GO:0009099">
    <property type="term" value="P:L-valine biosynthetic process"/>
    <property type="evidence" value="ECO:0007669"/>
    <property type="project" value="UniProtKB-UniRule"/>
</dbReference>
<dbReference type="FunFam" id="3.50.30.80:FF:000001">
    <property type="entry name" value="Dihydroxy-acid dehydratase"/>
    <property type="match status" value="1"/>
</dbReference>
<dbReference type="Gene3D" id="3.50.30.80">
    <property type="entry name" value="IlvD/EDD C-terminal domain-like"/>
    <property type="match status" value="1"/>
</dbReference>
<dbReference type="HAMAP" id="MF_00012">
    <property type="entry name" value="IlvD"/>
    <property type="match status" value="1"/>
</dbReference>
<dbReference type="InterPro" id="IPR042096">
    <property type="entry name" value="Dihydro-acid_dehy_C"/>
</dbReference>
<dbReference type="InterPro" id="IPR004404">
    <property type="entry name" value="DihydroxyA_deHydtase"/>
</dbReference>
<dbReference type="InterPro" id="IPR020558">
    <property type="entry name" value="DiOHA_6PGluconate_deHydtase_CS"/>
</dbReference>
<dbReference type="InterPro" id="IPR056740">
    <property type="entry name" value="ILV_EDD_C"/>
</dbReference>
<dbReference type="InterPro" id="IPR000581">
    <property type="entry name" value="ILV_EDD_N"/>
</dbReference>
<dbReference type="InterPro" id="IPR037237">
    <property type="entry name" value="IlvD/EDD_N"/>
</dbReference>
<dbReference type="NCBIfam" id="TIGR00110">
    <property type="entry name" value="ilvD"/>
    <property type="match status" value="1"/>
</dbReference>
<dbReference type="NCBIfam" id="NF002068">
    <property type="entry name" value="PRK00911.1"/>
    <property type="match status" value="1"/>
</dbReference>
<dbReference type="PANTHER" id="PTHR43661">
    <property type="entry name" value="D-XYLONATE DEHYDRATASE"/>
    <property type="match status" value="1"/>
</dbReference>
<dbReference type="PANTHER" id="PTHR43661:SF3">
    <property type="entry name" value="D-XYLONATE DEHYDRATASE YAGF-RELATED"/>
    <property type="match status" value="1"/>
</dbReference>
<dbReference type="Pfam" id="PF24877">
    <property type="entry name" value="ILV_EDD_C"/>
    <property type="match status" value="1"/>
</dbReference>
<dbReference type="Pfam" id="PF00920">
    <property type="entry name" value="ILVD_EDD_N"/>
    <property type="match status" value="1"/>
</dbReference>
<dbReference type="SUPFAM" id="SSF143975">
    <property type="entry name" value="IlvD/EDD N-terminal domain-like"/>
    <property type="match status" value="1"/>
</dbReference>
<dbReference type="SUPFAM" id="SSF52016">
    <property type="entry name" value="LeuD/IlvD-like"/>
    <property type="match status" value="1"/>
</dbReference>
<dbReference type="PROSITE" id="PS00886">
    <property type="entry name" value="ILVD_EDD_1"/>
    <property type="match status" value="1"/>
</dbReference>
<dbReference type="PROSITE" id="PS00887">
    <property type="entry name" value="ILVD_EDD_2"/>
    <property type="match status" value="1"/>
</dbReference>
<name>ILVD_LISMO</name>
<gene>
    <name evidence="1" type="primary">ilvD</name>
    <name type="ordered locus">lmo1983</name>
</gene>
<keyword id="KW-0001">2Fe-2S</keyword>
<keyword id="KW-0028">Amino-acid biosynthesis</keyword>
<keyword id="KW-0100">Branched-chain amino acid biosynthesis</keyword>
<keyword id="KW-0408">Iron</keyword>
<keyword id="KW-0411">Iron-sulfur</keyword>
<keyword id="KW-0456">Lyase</keyword>
<keyword id="KW-0460">Magnesium</keyword>
<keyword id="KW-0479">Metal-binding</keyword>
<keyword id="KW-1185">Reference proteome</keyword>